<comment type="function">
    <text evidence="2 5">Effector proteins function to alter host cell physiology and promote bacterial survival in host tissues. This protein is probably an E3 ubiquitin-protein ligase that interferes with the host's ubiquitination pathway and targets host proteins for proteasomal degradation (Probable) (PubMed:36511702). Mice infected with a strain of bacteria deleted for this gene were colonized less quickly by bacteria (PubMed:36511702).</text>
</comment>
<comment type="catalytic activity">
    <reaction evidence="1">
        <text>S-ubiquitinyl-[E2 ubiquitin-conjugating enzyme]-L-cysteine + [acceptor protein]-L-lysine = [E2 ubiquitin-conjugating enzyme]-L-cysteine + N(6)-ubiquitinyl-[acceptor protein]-L-lysine.</text>
        <dbReference type="EC" id="2.3.2.27"/>
    </reaction>
</comment>
<comment type="subcellular location">
    <subcellularLocation>
        <location evidence="2">Secreted</location>
    </subcellularLocation>
    <subcellularLocation>
        <location evidence="1">Host cytoplasm</location>
    </subcellularLocation>
    <text evidence="2">Secreted by a type 3 secretion system (T3SS).</text>
</comment>
<comment type="induction">
    <text evidence="2">Transcribed for 1.5-5 hours after treatment that induces type 3 secretion system expression.</text>
</comment>
<comment type="PTM">
    <text evidence="2">Two sizes of protein are detected in situ; only the smaller protein is secreted.</text>
</comment>
<comment type="disruption phenotype">
    <text evidence="2">Significant reduction in bacterial colonization in C3H/HeJ mice.</text>
</comment>
<comment type="similarity">
    <text evidence="4">Belongs to the NleG E3 ligase family.</text>
</comment>
<reference evidence="6" key="1">
    <citation type="journal article" date="2019" name="Microbiol. Resour. Announc.">
        <title>Complete Genome Sequence of Citrobacter rodentium Strain DBS100.</title>
        <authorList>
            <person name="Popov G."/>
            <person name="Fiebig-Comyn A."/>
            <person name="Shideler S."/>
            <person name="Coombes B.K."/>
            <person name="Savchenko A."/>
        </authorList>
    </citation>
    <scope>NUCLEOTIDE SEQUENCE [LARGE SCALE GENOMIC DNA]</scope>
    <source>
        <strain>DBS100</strain>
    </source>
</reference>
<reference key="2">
    <citation type="journal article" date="2023" name="Infect. Immun.">
        <title>Distinct Molecular Features of NleG Type 3 Secreted Effectors Allow for Different Roles during Citrobacter rodentium Infection in Mice.</title>
        <authorList>
            <person name="Popov G."/>
            <person name="Fiebig-Comyn A."/>
            <person name="Syriste L."/>
            <person name="Little D.J."/>
            <person name="Skarina T."/>
            <person name="Stogios P.J."/>
            <person name="Birstonas S."/>
            <person name="Coombes B.K."/>
            <person name="Savchenko A."/>
        </authorList>
    </citation>
    <scope>SUBCELLULAR LOCATION</scope>
    <scope>INDUCTION</scope>
    <scope>DISRUPTION PHENOTYPE</scope>
    <source>
        <strain>DBS100</strain>
    </source>
</reference>
<reference key="3">
    <citation type="journal article" date="2023" name="Infect. Immun.">
        <authorList>
            <person name="Popov G."/>
            <person name="Fiebig-Comyn A."/>
            <person name="Syriste L."/>
            <person name="Little D.J."/>
            <person name="Skarina T."/>
            <person name="Stogios P.J."/>
            <person name="Birstonas S."/>
            <person name="Coombes B.K."/>
            <person name="Savchenko A."/>
        </authorList>
    </citation>
    <scope>ERRATUM OF PUBMED:36511702</scope>
</reference>
<accession>A0A482PUS2</accession>
<name>NLEG7_CITRO</name>
<keyword id="KW-1035">Host cytoplasm</keyword>
<keyword id="KW-0964">Secreted</keyword>
<keyword id="KW-0808">Transferase</keyword>
<keyword id="KW-0833">Ubl conjugation pathway</keyword>
<keyword id="KW-0843">Virulence</keyword>
<proteinExistence type="evidence at transcript level"/>
<gene>
    <name evidence="3" type="primary">nleG7</name>
    <name evidence="6" type="ORF">E2R62_21230</name>
</gene>
<evidence type="ECO:0000250" key="1">
    <source>
        <dbReference type="UniProtKB" id="A0A482PDI9"/>
    </source>
</evidence>
<evidence type="ECO:0000269" key="2">
    <source>
    </source>
</evidence>
<evidence type="ECO:0000303" key="3">
    <source>
    </source>
</evidence>
<evidence type="ECO:0000305" key="4"/>
<evidence type="ECO:0000305" key="5">
    <source>
    </source>
</evidence>
<evidence type="ECO:0000312" key="6">
    <source>
        <dbReference type="EMBL" id="QBY31094.1"/>
    </source>
</evidence>
<dbReference type="EC" id="2.3.2.27" evidence="1"/>
<dbReference type="EMBL" id="CP038008">
    <property type="protein sequence ID" value="QBY31094.1"/>
    <property type="molecule type" value="Genomic_DNA"/>
</dbReference>
<dbReference type="RefSeq" id="WP_012908743.1">
    <property type="nucleotide sequence ID" value="NZ_JXUN01000124.1"/>
</dbReference>
<dbReference type="OMA" id="HSHAFIV"/>
<dbReference type="GO" id="GO:0004842">
    <property type="term" value="F:ubiquitin-protein transferase activity"/>
    <property type="evidence" value="ECO:0007669"/>
    <property type="project" value="InterPro"/>
</dbReference>
<dbReference type="GO" id="GO:0044403">
    <property type="term" value="P:biological process involved in symbiotic interaction"/>
    <property type="evidence" value="ECO:0007669"/>
    <property type="project" value="InterPro"/>
</dbReference>
<dbReference type="Gene3D" id="3.30.40.80">
    <property type="entry name" value="Effector protein NleG"/>
    <property type="match status" value="1"/>
</dbReference>
<dbReference type="InterPro" id="IPR010489">
    <property type="entry name" value="Effector_NleG"/>
</dbReference>
<dbReference type="InterPro" id="IPR038436">
    <property type="entry name" value="Effector_NleG_sf"/>
</dbReference>
<dbReference type="Pfam" id="PF06416">
    <property type="entry name" value="T3SS_NleG"/>
    <property type="match status" value="1"/>
</dbReference>
<feature type="chain" id="PRO_0000462550" description="Probable E3 ubiquitin-protein ligase NleG7">
    <location>
        <begin position="1"/>
        <end position="209"/>
    </location>
</feature>
<sequence length="209" mass="24260">MPIFLNFSAGSILPENELNSLRYIVQQNQNDTVIIRGRHQMEIRYIESVNGFTIHPVHSNHLSILMKRGNSLARNLERQINNGRSFEQVSRDFMLQLSLNIGWQKGAENALKSKIHSHAFIVNPDEFTCSKQYLECPITFCIPENGVFVKNSMDSKVCSLYDKSAIMQLIRKHHPHPLSREKIAKEMIIDKNNCYFDIMNQHFRILDTD</sequence>
<organism>
    <name type="scientific">Citrobacter rodentium</name>
    <dbReference type="NCBI Taxonomy" id="67825"/>
    <lineage>
        <taxon>Bacteria</taxon>
        <taxon>Pseudomonadati</taxon>
        <taxon>Pseudomonadota</taxon>
        <taxon>Gammaproteobacteria</taxon>
        <taxon>Enterobacterales</taxon>
        <taxon>Enterobacteriaceae</taxon>
        <taxon>Citrobacter</taxon>
    </lineage>
</organism>
<protein>
    <recommendedName>
        <fullName evidence="4">Probable E3 ubiquitin-protein ligase NleG7</fullName>
        <ecNumber evidence="1">2.3.2.27</ecNumber>
    </recommendedName>
</protein>